<reference key="1">
    <citation type="submission" date="2008-04" db="EMBL/GenBank/DDBJ databases">
        <title>Complete sequence of Yersinia pseudotuberculosis PB1/+.</title>
        <authorList>
            <person name="Copeland A."/>
            <person name="Lucas S."/>
            <person name="Lapidus A."/>
            <person name="Glavina del Rio T."/>
            <person name="Dalin E."/>
            <person name="Tice H."/>
            <person name="Bruce D."/>
            <person name="Goodwin L."/>
            <person name="Pitluck S."/>
            <person name="Munk A.C."/>
            <person name="Brettin T."/>
            <person name="Detter J.C."/>
            <person name="Han C."/>
            <person name="Tapia R."/>
            <person name="Schmutz J."/>
            <person name="Larimer F."/>
            <person name="Land M."/>
            <person name="Hauser L."/>
            <person name="Challacombe J.F."/>
            <person name="Green L."/>
            <person name="Lindler L.E."/>
            <person name="Nikolich M.P."/>
            <person name="Richardson P."/>
        </authorList>
    </citation>
    <scope>NUCLEOTIDE SEQUENCE [LARGE SCALE GENOMIC DNA]</scope>
    <source>
        <strain>PB1/+</strain>
    </source>
</reference>
<name>RL35_YERPB</name>
<protein>
    <recommendedName>
        <fullName evidence="1">Large ribosomal subunit protein bL35</fullName>
    </recommendedName>
    <alternativeName>
        <fullName evidence="2">50S ribosomal protein L35</fullName>
    </alternativeName>
</protein>
<proteinExistence type="inferred from homology"/>
<evidence type="ECO:0000255" key="1">
    <source>
        <dbReference type="HAMAP-Rule" id="MF_00514"/>
    </source>
</evidence>
<evidence type="ECO:0000305" key="2"/>
<organism>
    <name type="scientific">Yersinia pseudotuberculosis serotype IB (strain PB1/+)</name>
    <dbReference type="NCBI Taxonomy" id="502801"/>
    <lineage>
        <taxon>Bacteria</taxon>
        <taxon>Pseudomonadati</taxon>
        <taxon>Pseudomonadota</taxon>
        <taxon>Gammaproteobacteria</taxon>
        <taxon>Enterobacterales</taxon>
        <taxon>Yersiniaceae</taxon>
        <taxon>Yersinia</taxon>
    </lineage>
</organism>
<comment type="similarity">
    <text evidence="1">Belongs to the bacterial ribosomal protein bL35 family.</text>
</comment>
<feature type="chain" id="PRO_1000127431" description="Large ribosomal subunit protein bL35">
    <location>
        <begin position="1"/>
        <end position="65"/>
    </location>
</feature>
<keyword id="KW-0687">Ribonucleoprotein</keyword>
<keyword id="KW-0689">Ribosomal protein</keyword>
<dbReference type="EMBL" id="CP001048">
    <property type="protein sequence ID" value="ACC89375.1"/>
    <property type="molecule type" value="Genomic_DNA"/>
</dbReference>
<dbReference type="RefSeq" id="WP_002211834.1">
    <property type="nucleotide sequence ID" value="NZ_CP009780.1"/>
</dbReference>
<dbReference type="SMR" id="B2K666"/>
<dbReference type="GeneID" id="97456073"/>
<dbReference type="KEGG" id="ypb:YPTS_2414"/>
<dbReference type="PATRIC" id="fig|502801.10.peg.1821"/>
<dbReference type="GO" id="GO:0022625">
    <property type="term" value="C:cytosolic large ribosomal subunit"/>
    <property type="evidence" value="ECO:0007669"/>
    <property type="project" value="TreeGrafter"/>
</dbReference>
<dbReference type="GO" id="GO:0003735">
    <property type="term" value="F:structural constituent of ribosome"/>
    <property type="evidence" value="ECO:0007669"/>
    <property type="project" value="InterPro"/>
</dbReference>
<dbReference type="GO" id="GO:0006412">
    <property type="term" value="P:translation"/>
    <property type="evidence" value="ECO:0007669"/>
    <property type="project" value="UniProtKB-UniRule"/>
</dbReference>
<dbReference type="FunFam" id="4.10.410.60:FF:000001">
    <property type="entry name" value="50S ribosomal protein L35"/>
    <property type="match status" value="1"/>
</dbReference>
<dbReference type="Gene3D" id="4.10.410.60">
    <property type="match status" value="1"/>
</dbReference>
<dbReference type="HAMAP" id="MF_00514">
    <property type="entry name" value="Ribosomal_bL35"/>
    <property type="match status" value="1"/>
</dbReference>
<dbReference type="InterPro" id="IPR001706">
    <property type="entry name" value="Ribosomal_bL35"/>
</dbReference>
<dbReference type="InterPro" id="IPR021137">
    <property type="entry name" value="Ribosomal_bL35-like"/>
</dbReference>
<dbReference type="InterPro" id="IPR018265">
    <property type="entry name" value="Ribosomal_bL35_CS"/>
</dbReference>
<dbReference type="InterPro" id="IPR037229">
    <property type="entry name" value="Ribosomal_bL35_sf"/>
</dbReference>
<dbReference type="NCBIfam" id="TIGR00001">
    <property type="entry name" value="rpmI_bact"/>
    <property type="match status" value="1"/>
</dbReference>
<dbReference type="PANTHER" id="PTHR33343">
    <property type="entry name" value="54S RIBOSOMAL PROTEIN BL35M"/>
    <property type="match status" value="1"/>
</dbReference>
<dbReference type="PANTHER" id="PTHR33343:SF1">
    <property type="entry name" value="LARGE RIBOSOMAL SUBUNIT PROTEIN BL35M"/>
    <property type="match status" value="1"/>
</dbReference>
<dbReference type="Pfam" id="PF01632">
    <property type="entry name" value="Ribosomal_L35p"/>
    <property type="match status" value="1"/>
</dbReference>
<dbReference type="PRINTS" id="PR00064">
    <property type="entry name" value="RIBOSOMALL35"/>
</dbReference>
<dbReference type="SUPFAM" id="SSF143034">
    <property type="entry name" value="L35p-like"/>
    <property type="match status" value="1"/>
</dbReference>
<dbReference type="PROSITE" id="PS00936">
    <property type="entry name" value="RIBOSOMAL_L35"/>
    <property type="match status" value="1"/>
</dbReference>
<accession>B2K666</accession>
<gene>
    <name evidence="1" type="primary">rpmI</name>
    <name type="ordered locus">YPTS_2414</name>
</gene>
<sequence length="65" mass="7319">MPKIKTVRGAAKRFKKTANGGFKRKHANLRHILTKKATKRKRHLRPKGLVSKNDLGLVVACLPYA</sequence>